<sequence>MEGFSLRINQFLAHYTKHSRREAEKLVLEGRVKINHEHAKLASVVKENDRVFLDKRLIKPLKNKKFSVLVYHKPKGELVSKADPLKRRVIYESLEKKYAHFAPVGRLDFASEGVLLLSDSKAVVSALMHADLEKEYLIKIQGFVTREMENAMQEGLKLENATKGAHQKTPIKSMEFAPFIGYEIIKNHAKYSKLRVIINEGKNRELRRFFAFFNAGVLDLRRVRYGFVNLNALPVGKMRFLNRQEYNELHAFMANAANVKGD</sequence>
<keyword id="KW-0413">Isomerase</keyword>
<keyword id="KW-1185">Reference proteome</keyword>
<keyword id="KW-0694">RNA-binding</keyword>
<reference key="1">
    <citation type="journal article" date="1997" name="Nature">
        <title>The complete genome sequence of the gastric pathogen Helicobacter pylori.</title>
        <authorList>
            <person name="Tomb J.-F."/>
            <person name="White O."/>
            <person name="Kerlavage A.R."/>
            <person name="Clayton R.A."/>
            <person name="Sutton G.G."/>
            <person name="Fleischmann R.D."/>
            <person name="Ketchum K.A."/>
            <person name="Klenk H.-P."/>
            <person name="Gill S.R."/>
            <person name="Dougherty B.A."/>
            <person name="Nelson K.E."/>
            <person name="Quackenbush J."/>
            <person name="Zhou L."/>
            <person name="Kirkness E.F."/>
            <person name="Peterson S.N."/>
            <person name="Loftus B.J."/>
            <person name="Richardson D.L."/>
            <person name="Dodson R.J."/>
            <person name="Khalak H.G."/>
            <person name="Glodek A."/>
            <person name="McKenney K."/>
            <person name="FitzGerald L.M."/>
            <person name="Lee N."/>
            <person name="Adams M.D."/>
            <person name="Hickey E.K."/>
            <person name="Berg D.E."/>
            <person name="Gocayne J.D."/>
            <person name="Utterback T.R."/>
            <person name="Peterson J.D."/>
            <person name="Kelley J.M."/>
            <person name="Cotton M.D."/>
            <person name="Weidman J.F."/>
            <person name="Fujii C."/>
            <person name="Bowman C."/>
            <person name="Watthey L."/>
            <person name="Wallin E."/>
            <person name="Hayes W.S."/>
            <person name="Borodovsky M."/>
            <person name="Karp P.D."/>
            <person name="Smith H.O."/>
            <person name="Fraser C.M."/>
            <person name="Venter J.C."/>
        </authorList>
    </citation>
    <scope>NUCLEOTIDE SEQUENCE [LARGE SCALE GENOMIC DNA]</scope>
    <source>
        <strain>ATCC 700392 / 26695</strain>
    </source>
</reference>
<gene>
    <name type="ordered locus">HP_1459</name>
</gene>
<feature type="chain" id="PRO_0000100026" description="Uncharacterized RNA pseudouridine synthase HP_1459">
    <location>
        <begin position="1"/>
        <end position="262"/>
    </location>
</feature>
<feature type="domain" description="S4 RNA-binding" evidence="2">
    <location>
        <begin position="6"/>
        <end position="70"/>
    </location>
</feature>
<feature type="active site" description="Nucleophile" evidence="1">
    <location>
        <position position="108"/>
    </location>
</feature>
<organism>
    <name type="scientific">Helicobacter pylori (strain ATCC 700392 / 26695)</name>
    <name type="common">Campylobacter pylori</name>
    <dbReference type="NCBI Taxonomy" id="85962"/>
    <lineage>
        <taxon>Bacteria</taxon>
        <taxon>Pseudomonadati</taxon>
        <taxon>Campylobacterota</taxon>
        <taxon>Epsilonproteobacteria</taxon>
        <taxon>Campylobacterales</taxon>
        <taxon>Helicobacteraceae</taxon>
        <taxon>Helicobacter</taxon>
    </lineage>
</organism>
<evidence type="ECO:0000250" key="1"/>
<evidence type="ECO:0000255" key="2">
    <source>
        <dbReference type="PROSITE-ProRule" id="PRU00182"/>
    </source>
</evidence>
<evidence type="ECO:0000305" key="3"/>
<proteinExistence type="inferred from homology"/>
<name>Y1459_HELPY</name>
<dbReference type="EC" id="5.4.99.-"/>
<dbReference type="EMBL" id="AE000511">
    <property type="protein sequence ID" value="AAD08501.1"/>
    <property type="molecule type" value="Genomic_DNA"/>
</dbReference>
<dbReference type="PIR" id="C64702">
    <property type="entry name" value="C64702"/>
</dbReference>
<dbReference type="RefSeq" id="NP_208250.1">
    <property type="nucleotide sequence ID" value="NC_000915.1"/>
</dbReference>
<dbReference type="RefSeq" id="WP_000398405.1">
    <property type="nucleotide sequence ID" value="NC_018939.1"/>
</dbReference>
<dbReference type="SMR" id="P55986"/>
<dbReference type="DIP" id="DIP-3572N"/>
<dbReference type="FunCoup" id="P55986">
    <property type="interactions" value="18"/>
</dbReference>
<dbReference type="IntAct" id="P55986">
    <property type="interactions" value="1"/>
</dbReference>
<dbReference type="MINT" id="P55986"/>
<dbReference type="STRING" id="85962.HP_1459"/>
<dbReference type="PaxDb" id="85962-C694_07555"/>
<dbReference type="EnsemblBacteria" id="AAD08501">
    <property type="protein sequence ID" value="AAD08501"/>
    <property type="gene ID" value="HP_1459"/>
</dbReference>
<dbReference type="KEGG" id="hpy:HP_1459"/>
<dbReference type="PATRIC" id="fig|85962.8.peg.1533"/>
<dbReference type="eggNOG" id="COG1187">
    <property type="taxonomic scope" value="Bacteria"/>
</dbReference>
<dbReference type="InParanoid" id="P55986"/>
<dbReference type="OrthoDB" id="9807213at2"/>
<dbReference type="PhylomeDB" id="P55986"/>
<dbReference type="Proteomes" id="UP000000429">
    <property type="component" value="Chromosome"/>
</dbReference>
<dbReference type="GO" id="GO:0003723">
    <property type="term" value="F:RNA binding"/>
    <property type="evidence" value="ECO:0007669"/>
    <property type="project" value="UniProtKB-KW"/>
</dbReference>
<dbReference type="GO" id="GO:0120159">
    <property type="term" value="F:rRNA pseudouridine synthase activity"/>
    <property type="evidence" value="ECO:0007669"/>
    <property type="project" value="UniProtKB-ARBA"/>
</dbReference>
<dbReference type="GO" id="GO:0000455">
    <property type="term" value="P:enzyme-directed rRNA pseudouridine synthesis"/>
    <property type="evidence" value="ECO:0007669"/>
    <property type="project" value="UniProtKB-ARBA"/>
</dbReference>
<dbReference type="CDD" id="cd00165">
    <property type="entry name" value="S4"/>
    <property type="match status" value="1"/>
</dbReference>
<dbReference type="Gene3D" id="3.30.70.1560">
    <property type="entry name" value="Alpha-L RNA-binding motif"/>
    <property type="match status" value="1"/>
</dbReference>
<dbReference type="Gene3D" id="3.30.70.580">
    <property type="entry name" value="Pseudouridine synthase I, catalytic domain, N-terminal subdomain"/>
    <property type="match status" value="1"/>
</dbReference>
<dbReference type="Gene3D" id="3.10.290.10">
    <property type="entry name" value="RNA-binding S4 domain"/>
    <property type="match status" value="1"/>
</dbReference>
<dbReference type="InterPro" id="IPR042092">
    <property type="entry name" value="PsdUridine_s_RsuA/RluB/E/F_cat"/>
</dbReference>
<dbReference type="InterPro" id="IPR020103">
    <property type="entry name" value="PsdUridine_synth_cat_dom_sf"/>
</dbReference>
<dbReference type="InterPro" id="IPR006145">
    <property type="entry name" value="PsdUridine_synth_RsuA/RluA"/>
</dbReference>
<dbReference type="InterPro" id="IPR000748">
    <property type="entry name" value="PsdUridine_synth_RsuA/RluB/E/F"/>
</dbReference>
<dbReference type="InterPro" id="IPR018496">
    <property type="entry name" value="PsdUridine_synth_RsuA/RluB_CS"/>
</dbReference>
<dbReference type="InterPro" id="IPR050343">
    <property type="entry name" value="RsuA_PseudoU_synthase"/>
</dbReference>
<dbReference type="InterPro" id="IPR002942">
    <property type="entry name" value="S4_RNA-bd"/>
</dbReference>
<dbReference type="InterPro" id="IPR036986">
    <property type="entry name" value="S4_RNA-bd_sf"/>
</dbReference>
<dbReference type="InterPro" id="IPR020094">
    <property type="entry name" value="TruA/RsuA/RluB/E/F_N"/>
</dbReference>
<dbReference type="NCBIfam" id="TIGR00093">
    <property type="entry name" value="pseudouridine synthase"/>
    <property type="match status" value="1"/>
</dbReference>
<dbReference type="PANTHER" id="PTHR47683">
    <property type="entry name" value="PSEUDOURIDINE SYNTHASE FAMILY PROTEIN-RELATED"/>
    <property type="match status" value="1"/>
</dbReference>
<dbReference type="PANTHER" id="PTHR47683:SF2">
    <property type="entry name" value="RNA-BINDING S4 DOMAIN-CONTAINING PROTEIN"/>
    <property type="match status" value="1"/>
</dbReference>
<dbReference type="Pfam" id="PF00849">
    <property type="entry name" value="PseudoU_synth_2"/>
    <property type="match status" value="1"/>
</dbReference>
<dbReference type="Pfam" id="PF01479">
    <property type="entry name" value="S4"/>
    <property type="match status" value="1"/>
</dbReference>
<dbReference type="SMART" id="SM00363">
    <property type="entry name" value="S4"/>
    <property type="match status" value="1"/>
</dbReference>
<dbReference type="SUPFAM" id="SSF55174">
    <property type="entry name" value="Alpha-L RNA-binding motif"/>
    <property type="match status" value="1"/>
</dbReference>
<dbReference type="SUPFAM" id="SSF55120">
    <property type="entry name" value="Pseudouridine synthase"/>
    <property type="match status" value="1"/>
</dbReference>
<dbReference type="PROSITE" id="PS01149">
    <property type="entry name" value="PSI_RSU"/>
    <property type="match status" value="1"/>
</dbReference>
<dbReference type="PROSITE" id="PS50889">
    <property type="entry name" value="S4"/>
    <property type="match status" value="1"/>
</dbReference>
<protein>
    <recommendedName>
        <fullName>Uncharacterized RNA pseudouridine synthase HP_1459</fullName>
        <ecNumber>5.4.99.-</ecNumber>
    </recommendedName>
    <alternativeName>
        <fullName>RNA pseudouridylate synthase</fullName>
    </alternativeName>
    <alternativeName>
        <fullName>RNA-uridine isomerase</fullName>
    </alternativeName>
</protein>
<accession>P55986</accession>
<comment type="catalytic activity">
    <reaction>
        <text>a uridine in RNA = a pseudouridine in RNA</text>
        <dbReference type="Rhea" id="RHEA:48348"/>
        <dbReference type="Rhea" id="RHEA-COMP:12068"/>
        <dbReference type="Rhea" id="RHEA-COMP:12069"/>
        <dbReference type="ChEBI" id="CHEBI:65314"/>
        <dbReference type="ChEBI" id="CHEBI:65315"/>
    </reaction>
</comment>
<comment type="similarity">
    <text evidence="3">Belongs to the pseudouridine synthase RsuA family.</text>
</comment>